<reference key="1">
    <citation type="journal article" date="2004" name="Nat. Genet.">
        <title>Evidence in the Legionella pneumophila genome for exploitation of host cell functions and high genome plasticity.</title>
        <authorList>
            <person name="Cazalet C."/>
            <person name="Rusniok C."/>
            <person name="Brueggemann H."/>
            <person name="Zidane N."/>
            <person name="Magnier A."/>
            <person name="Ma L."/>
            <person name="Tichit M."/>
            <person name="Jarraud S."/>
            <person name="Bouchier C."/>
            <person name="Vandenesch F."/>
            <person name="Kunst F."/>
            <person name="Etienne J."/>
            <person name="Glaser P."/>
            <person name="Buchrieser C."/>
        </authorList>
    </citation>
    <scope>NUCLEOTIDE SEQUENCE [LARGE SCALE GENOMIC DNA]</scope>
    <source>
        <strain>Lens</strain>
    </source>
</reference>
<feature type="chain" id="PRO_1000045663" description="Probable glycine dehydrogenase (decarboxylating) subunit 1">
    <location>
        <begin position="1"/>
        <end position="456"/>
    </location>
</feature>
<keyword id="KW-0560">Oxidoreductase</keyword>
<comment type="function">
    <text evidence="1">The glycine cleavage system catalyzes the degradation of glycine. The P protein binds the alpha-amino group of glycine through its pyridoxal phosphate cofactor; CO(2) is released and the remaining methylamine moiety is then transferred to the lipoamide cofactor of the H protein.</text>
</comment>
<comment type="catalytic activity">
    <reaction evidence="1">
        <text>N(6)-[(R)-lipoyl]-L-lysyl-[glycine-cleavage complex H protein] + glycine + H(+) = N(6)-[(R)-S(8)-aminomethyldihydrolipoyl]-L-lysyl-[glycine-cleavage complex H protein] + CO2</text>
        <dbReference type="Rhea" id="RHEA:24304"/>
        <dbReference type="Rhea" id="RHEA-COMP:10494"/>
        <dbReference type="Rhea" id="RHEA-COMP:10495"/>
        <dbReference type="ChEBI" id="CHEBI:15378"/>
        <dbReference type="ChEBI" id="CHEBI:16526"/>
        <dbReference type="ChEBI" id="CHEBI:57305"/>
        <dbReference type="ChEBI" id="CHEBI:83099"/>
        <dbReference type="ChEBI" id="CHEBI:83143"/>
        <dbReference type="EC" id="1.4.4.2"/>
    </reaction>
</comment>
<comment type="subunit">
    <text evidence="1">The glycine cleavage system is composed of four proteins: P, T, L and H. In this organism, the P 'protein' is a heterodimer of two subunits.</text>
</comment>
<comment type="similarity">
    <text evidence="1">Belongs to the GcvP family. N-terminal subunit subfamily.</text>
</comment>
<name>GCSPA_LEGPL</name>
<proteinExistence type="inferred from homology"/>
<gene>
    <name evidence="1" type="primary">gcvPA</name>
    <name type="ordered locus">lpl0115</name>
</gene>
<evidence type="ECO:0000255" key="1">
    <source>
        <dbReference type="HAMAP-Rule" id="MF_00712"/>
    </source>
</evidence>
<dbReference type="EC" id="1.4.4.2" evidence="1"/>
<dbReference type="EMBL" id="CR628337">
    <property type="protein sequence ID" value="CAH14345.1"/>
    <property type="molecule type" value="Genomic_DNA"/>
</dbReference>
<dbReference type="RefSeq" id="WP_011214399.1">
    <property type="nucleotide sequence ID" value="NC_006369.1"/>
</dbReference>
<dbReference type="SMR" id="Q5X0A6"/>
<dbReference type="KEGG" id="lpf:lpl0115"/>
<dbReference type="LegioList" id="lpl0115"/>
<dbReference type="HOGENOM" id="CLU_004620_0_2_6"/>
<dbReference type="Proteomes" id="UP000002517">
    <property type="component" value="Chromosome"/>
</dbReference>
<dbReference type="GO" id="GO:0004375">
    <property type="term" value="F:glycine dehydrogenase (decarboxylating) activity"/>
    <property type="evidence" value="ECO:0007669"/>
    <property type="project" value="UniProtKB-EC"/>
</dbReference>
<dbReference type="GO" id="GO:0019464">
    <property type="term" value="P:glycine decarboxylation via glycine cleavage system"/>
    <property type="evidence" value="ECO:0007669"/>
    <property type="project" value="UniProtKB-UniRule"/>
</dbReference>
<dbReference type="GO" id="GO:0009116">
    <property type="term" value="P:nucleoside metabolic process"/>
    <property type="evidence" value="ECO:0007669"/>
    <property type="project" value="InterPro"/>
</dbReference>
<dbReference type="CDD" id="cd00613">
    <property type="entry name" value="GDC-P"/>
    <property type="match status" value="1"/>
</dbReference>
<dbReference type="Gene3D" id="3.90.1150.10">
    <property type="entry name" value="Aspartate Aminotransferase, domain 1"/>
    <property type="match status" value="1"/>
</dbReference>
<dbReference type="Gene3D" id="3.40.640.10">
    <property type="entry name" value="Type I PLP-dependent aspartate aminotransferase-like (Major domain)"/>
    <property type="match status" value="1"/>
</dbReference>
<dbReference type="HAMAP" id="MF_00712">
    <property type="entry name" value="GcvPA"/>
    <property type="match status" value="1"/>
</dbReference>
<dbReference type="InterPro" id="IPR023010">
    <property type="entry name" value="GcvPA"/>
</dbReference>
<dbReference type="InterPro" id="IPR049315">
    <property type="entry name" value="GDC-P_N"/>
</dbReference>
<dbReference type="InterPro" id="IPR020581">
    <property type="entry name" value="GDC_P"/>
</dbReference>
<dbReference type="InterPro" id="IPR015424">
    <property type="entry name" value="PyrdxlP-dep_Trfase"/>
</dbReference>
<dbReference type="InterPro" id="IPR015421">
    <property type="entry name" value="PyrdxlP-dep_Trfase_major"/>
</dbReference>
<dbReference type="InterPro" id="IPR015422">
    <property type="entry name" value="PyrdxlP-dep_Trfase_small"/>
</dbReference>
<dbReference type="NCBIfam" id="NF001696">
    <property type="entry name" value="PRK00451.1"/>
    <property type="match status" value="1"/>
</dbReference>
<dbReference type="PANTHER" id="PTHR42806">
    <property type="entry name" value="GLYCINE CLEAVAGE SYSTEM P-PROTEIN"/>
    <property type="match status" value="1"/>
</dbReference>
<dbReference type="PANTHER" id="PTHR42806:SF1">
    <property type="entry name" value="GLYCINE DEHYDROGENASE (DECARBOXYLATING)"/>
    <property type="match status" value="1"/>
</dbReference>
<dbReference type="Pfam" id="PF02347">
    <property type="entry name" value="GDC-P"/>
    <property type="match status" value="1"/>
</dbReference>
<dbReference type="PIRSF" id="PIRSF006815">
    <property type="entry name" value="GcvPA"/>
    <property type="match status" value="1"/>
</dbReference>
<dbReference type="SUPFAM" id="SSF53383">
    <property type="entry name" value="PLP-dependent transferases"/>
    <property type="match status" value="1"/>
</dbReference>
<organism>
    <name type="scientific">Legionella pneumophila (strain Lens)</name>
    <dbReference type="NCBI Taxonomy" id="297245"/>
    <lineage>
        <taxon>Bacteria</taxon>
        <taxon>Pseudomonadati</taxon>
        <taxon>Pseudomonadota</taxon>
        <taxon>Gammaproteobacteria</taxon>
        <taxon>Legionellales</taxon>
        <taxon>Legionellaceae</taxon>
        <taxon>Legionella</taxon>
    </lineage>
</organism>
<accession>Q5X0A6</accession>
<protein>
    <recommendedName>
        <fullName evidence="1">Probable glycine dehydrogenase (decarboxylating) subunit 1</fullName>
        <ecNumber evidence="1">1.4.4.2</ecNumber>
    </recommendedName>
    <alternativeName>
        <fullName evidence="1">Glycine cleavage system P-protein subunit 1</fullName>
    </alternativeName>
    <alternativeName>
        <fullName evidence="1">Glycine decarboxylase subunit 1</fullName>
    </alternativeName>
    <alternativeName>
        <fullName evidence="1">Glycine dehydrogenase (aminomethyl-transferring) subunit 1</fullName>
    </alternativeName>
</protein>
<sequence length="456" mass="49752">MPYIPHTPNDTKEMLAAIGAQDIQDLFDEIPASLQYAGFQNIPAGINEMEMLKEAQNQAQKNRNGICFIGAGCYEHHIPAAVWDIASRGEFLTAYTPYQAEASQGTLQLLYEYQTMICELTGMEVSNASMYDGATALAEAVLMAVRLNKHSKTNRVLIAGTVHPFYRETIETIVRNQHIEVITLPFDEQQGITDLGSLNQYTGEDITALVIAQPNFFGCLEQVDKMTSWAHHNKTISVACINPTSLALLKPPGSWGEHGVDIVCGEGQPLGSPMASGGPYFGFLSTRMAHVRQMPGRIIGRTVDKDGKTGFSLTLQAREQHIRRAKATSNICTNQGLLVTAATIYMSLLGPEGLSQVATQCHQNTHELITALTQIEGVEQAFKASFFHEALIKLNQPVQSVLQQLADAGIAGGYAPEQHYPQLANTLLVCATEVRTAEDIAKYAKTLKAIMSKRGA</sequence>